<feature type="chain" id="PRO_0000061335" description="Cytochrome b">
    <location>
        <begin position="1"/>
        <end position="379"/>
    </location>
</feature>
<feature type="transmembrane region" description="Helical" evidence="2">
    <location>
        <begin position="33"/>
        <end position="53"/>
    </location>
</feature>
<feature type="transmembrane region" description="Helical" evidence="2">
    <location>
        <begin position="77"/>
        <end position="98"/>
    </location>
</feature>
<feature type="transmembrane region" description="Helical" evidence="2">
    <location>
        <begin position="113"/>
        <end position="133"/>
    </location>
</feature>
<feature type="transmembrane region" description="Helical" evidence="2">
    <location>
        <begin position="178"/>
        <end position="198"/>
    </location>
</feature>
<feature type="transmembrane region" description="Helical" evidence="2">
    <location>
        <begin position="226"/>
        <end position="246"/>
    </location>
</feature>
<feature type="transmembrane region" description="Helical" evidence="2">
    <location>
        <begin position="288"/>
        <end position="308"/>
    </location>
</feature>
<feature type="transmembrane region" description="Helical" evidence="2">
    <location>
        <begin position="320"/>
        <end position="340"/>
    </location>
</feature>
<feature type="transmembrane region" description="Helical" evidence="2">
    <location>
        <begin position="347"/>
        <end position="367"/>
    </location>
</feature>
<feature type="binding site" description="axial binding residue" evidence="2">
    <location>
        <position position="83"/>
    </location>
    <ligand>
        <name>heme b</name>
        <dbReference type="ChEBI" id="CHEBI:60344"/>
        <label>b562</label>
    </ligand>
    <ligandPart>
        <name>Fe</name>
        <dbReference type="ChEBI" id="CHEBI:18248"/>
    </ligandPart>
</feature>
<feature type="binding site" description="axial binding residue" evidence="2">
    <location>
        <position position="97"/>
    </location>
    <ligand>
        <name>heme b</name>
        <dbReference type="ChEBI" id="CHEBI:60344"/>
        <label>b566</label>
    </ligand>
    <ligandPart>
        <name>Fe</name>
        <dbReference type="ChEBI" id="CHEBI:18248"/>
    </ligandPart>
</feature>
<feature type="binding site" description="axial binding residue" evidence="2">
    <location>
        <position position="182"/>
    </location>
    <ligand>
        <name>heme b</name>
        <dbReference type="ChEBI" id="CHEBI:60344"/>
        <label>b562</label>
    </ligand>
    <ligandPart>
        <name>Fe</name>
        <dbReference type="ChEBI" id="CHEBI:18248"/>
    </ligandPart>
</feature>
<feature type="binding site" description="axial binding residue" evidence="2">
    <location>
        <position position="196"/>
    </location>
    <ligand>
        <name>heme b</name>
        <dbReference type="ChEBI" id="CHEBI:60344"/>
        <label>b566</label>
    </ligand>
    <ligandPart>
        <name>Fe</name>
        <dbReference type="ChEBI" id="CHEBI:18248"/>
    </ligandPart>
</feature>
<feature type="binding site" evidence="2">
    <location>
        <position position="201"/>
    </location>
    <ligand>
        <name>a ubiquinone</name>
        <dbReference type="ChEBI" id="CHEBI:16389"/>
    </ligand>
</feature>
<dbReference type="EMBL" id="AF034729">
    <property type="protein sequence ID" value="AAC31684.1"/>
    <property type="molecule type" value="Genomic_DNA"/>
</dbReference>
<dbReference type="GO" id="GO:0005743">
    <property type="term" value="C:mitochondrial inner membrane"/>
    <property type="evidence" value="ECO:0007669"/>
    <property type="project" value="UniProtKB-SubCell"/>
</dbReference>
<dbReference type="GO" id="GO:0045275">
    <property type="term" value="C:respiratory chain complex III"/>
    <property type="evidence" value="ECO:0007669"/>
    <property type="project" value="InterPro"/>
</dbReference>
<dbReference type="GO" id="GO:0046872">
    <property type="term" value="F:metal ion binding"/>
    <property type="evidence" value="ECO:0007669"/>
    <property type="project" value="UniProtKB-KW"/>
</dbReference>
<dbReference type="GO" id="GO:0008121">
    <property type="term" value="F:ubiquinol-cytochrome-c reductase activity"/>
    <property type="evidence" value="ECO:0007669"/>
    <property type="project" value="InterPro"/>
</dbReference>
<dbReference type="GO" id="GO:0006122">
    <property type="term" value="P:mitochondrial electron transport, ubiquinol to cytochrome c"/>
    <property type="evidence" value="ECO:0007669"/>
    <property type="project" value="TreeGrafter"/>
</dbReference>
<dbReference type="CDD" id="cd00290">
    <property type="entry name" value="cytochrome_b_C"/>
    <property type="match status" value="1"/>
</dbReference>
<dbReference type="CDD" id="cd00284">
    <property type="entry name" value="Cytochrome_b_N"/>
    <property type="match status" value="1"/>
</dbReference>
<dbReference type="FunFam" id="1.20.810.10:FF:000002">
    <property type="entry name" value="Cytochrome b"/>
    <property type="match status" value="1"/>
</dbReference>
<dbReference type="Gene3D" id="1.20.810.10">
    <property type="entry name" value="Cytochrome Bc1 Complex, Chain C"/>
    <property type="match status" value="1"/>
</dbReference>
<dbReference type="InterPro" id="IPR005798">
    <property type="entry name" value="Cyt_b/b6_C"/>
</dbReference>
<dbReference type="InterPro" id="IPR036150">
    <property type="entry name" value="Cyt_b/b6_C_sf"/>
</dbReference>
<dbReference type="InterPro" id="IPR005797">
    <property type="entry name" value="Cyt_b/b6_N"/>
</dbReference>
<dbReference type="InterPro" id="IPR027387">
    <property type="entry name" value="Cytb/b6-like_sf"/>
</dbReference>
<dbReference type="InterPro" id="IPR030689">
    <property type="entry name" value="Cytochrome_b"/>
</dbReference>
<dbReference type="InterPro" id="IPR048260">
    <property type="entry name" value="Cytochrome_b_C_euk/bac"/>
</dbReference>
<dbReference type="InterPro" id="IPR048259">
    <property type="entry name" value="Cytochrome_b_N_euk/bac"/>
</dbReference>
<dbReference type="InterPro" id="IPR016174">
    <property type="entry name" value="Di-haem_cyt_TM"/>
</dbReference>
<dbReference type="PANTHER" id="PTHR19271">
    <property type="entry name" value="CYTOCHROME B"/>
    <property type="match status" value="1"/>
</dbReference>
<dbReference type="PANTHER" id="PTHR19271:SF16">
    <property type="entry name" value="CYTOCHROME B"/>
    <property type="match status" value="1"/>
</dbReference>
<dbReference type="Pfam" id="PF00032">
    <property type="entry name" value="Cytochrom_B_C"/>
    <property type="match status" value="1"/>
</dbReference>
<dbReference type="Pfam" id="PF00033">
    <property type="entry name" value="Cytochrome_B"/>
    <property type="match status" value="1"/>
</dbReference>
<dbReference type="PIRSF" id="PIRSF038885">
    <property type="entry name" value="COB"/>
    <property type="match status" value="1"/>
</dbReference>
<dbReference type="SUPFAM" id="SSF81648">
    <property type="entry name" value="a domain/subunit of cytochrome bc1 complex (Ubiquinol-cytochrome c reductase)"/>
    <property type="match status" value="1"/>
</dbReference>
<dbReference type="SUPFAM" id="SSF81342">
    <property type="entry name" value="Transmembrane di-heme cytochromes"/>
    <property type="match status" value="1"/>
</dbReference>
<dbReference type="PROSITE" id="PS51003">
    <property type="entry name" value="CYTB_CTER"/>
    <property type="match status" value="1"/>
</dbReference>
<dbReference type="PROSITE" id="PS51002">
    <property type="entry name" value="CYTB_NTER"/>
    <property type="match status" value="1"/>
</dbReference>
<proteinExistence type="inferred from homology"/>
<geneLocation type="mitochondrion"/>
<reference key="1">
    <citation type="journal article" date="1998" name="J. Mammal. Evol.">
        <title>Molecular systematics of the subfamily Caprinae (Artiodactyla, Bovidae) as determined from cytochrome b sequences.</title>
        <authorList>
            <person name="Hassanin A."/>
            <person name="Pasquet E."/>
            <person name="Vigne J.-D."/>
        </authorList>
    </citation>
    <scope>NUCLEOTIDE SEQUENCE [GENOMIC DNA]</scope>
</reference>
<accession>O78780</accession>
<comment type="function">
    <text evidence="2">Component of the ubiquinol-cytochrome c reductase complex (complex III or cytochrome b-c1 complex) that is part of the mitochondrial respiratory chain. The b-c1 complex mediates electron transfer from ubiquinol to cytochrome c. Contributes to the generation of a proton gradient across the mitochondrial membrane that is then used for ATP synthesis.</text>
</comment>
<comment type="cofactor">
    <cofactor evidence="2">
        <name>heme b</name>
        <dbReference type="ChEBI" id="CHEBI:60344"/>
    </cofactor>
    <text evidence="2">Binds 2 heme b groups non-covalently.</text>
</comment>
<comment type="subunit">
    <text evidence="2">The cytochrome bc1 complex contains 11 subunits: 3 respiratory subunits (MT-CYB, CYC1 and UQCRFS1), 2 core proteins (UQCRC1 and UQCRC2) and 6 low-molecular weight proteins (UQCRH/QCR6, UQCRB/QCR7, UQCRQ/QCR8, UQCR10/QCR9, UQCR11/QCR10 and a cleavage product of UQCRFS1). This cytochrome bc1 complex then forms a dimer.</text>
</comment>
<comment type="subcellular location">
    <subcellularLocation>
        <location evidence="2">Mitochondrion inner membrane</location>
        <topology evidence="2">Multi-pass membrane protein</topology>
    </subcellularLocation>
</comment>
<comment type="miscellaneous">
    <text evidence="1">Heme 1 (or BL or b562) is low-potential and absorbs at about 562 nm, and heme 2 (or BH or b566) is high-potential and absorbs at about 566 nm.</text>
</comment>
<comment type="similarity">
    <text evidence="3 4">Belongs to the cytochrome b family.</text>
</comment>
<comment type="caution">
    <text evidence="2">The full-length protein contains only eight transmembrane helices, not nine as predicted by bioinformatics tools.</text>
</comment>
<organism>
    <name type="scientific">Ovis vignei</name>
    <name type="common">Urial sheep</name>
    <name type="synonym">Ovis aries vignei</name>
    <dbReference type="NCBI Taxonomy" id="59896"/>
    <lineage>
        <taxon>Eukaryota</taxon>
        <taxon>Metazoa</taxon>
        <taxon>Chordata</taxon>
        <taxon>Craniata</taxon>
        <taxon>Vertebrata</taxon>
        <taxon>Euteleostomi</taxon>
        <taxon>Mammalia</taxon>
        <taxon>Eutheria</taxon>
        <taxon>Laurasiatheria</taxon>
        <taxon>Artiodactyla</taxon>
        <taxon>Ruminantia</taxon>
        <taxon>Pecora</taxon>
        <taxon>Bovidae</taxon>
        <taxon>Caprinae</taxon>
        <taxon>Ovis</taxon>
    </lineage>
</organism>
<name>CYB_OVIVI</name>
<keyword id="KW-0249">Electron transport</keyword>
<keyword id="KW-0349">Heme</keyword>
<keyword id="KW-0408">Iron</keyword>
<keyword id="KW-0472">Membrane</keyword>
<keyword id="KW-0479">Metal-binding</keyword>
<keyword id="KW-0496">Mitochondrion</keyword>
<keyword id="KW-0999">Mitochondrion inner membrane</keyword>
<keyword id="KW-0679">Respiratory chain</keyword>
<keyword id="KW-0812">Transmembrane</keyword>
<keyword id="KW-1133">Transmembrane helix</keyword>
<keyword id="KW-0813">Transport</keyword>
<keyword id="KW-0830">Ubiquinone</keyword>
<protein>
    <recommendedName>
        <fullName>Cytochrome b</fullName>
    </recommendedName>
    <alternativeName>
        <fullName>Complex III subunit 3</fullName>
    </alternativeName>
    <alternativeName>
        <fullName>Complex III subunit III</fullName>
    </alternativeName>
    <alternativeName>
        <fullName>Cytochrome b-c1 complex subunit 3</fullName>
    </alternativeName>
    <alternativeName>
        <fullName>Ubiquinol-cytochrome-c reductase complex cytochrome b subunit</fullName>
    </alternativeName>
</protein>
<evidence type="ECO:0000250" key="1"/>
<evidence type="ECO:0000250" key="2">
    <source>
        <dbReference type="UniProtKB" id="P00157"/>
    </source>
</evidence>
<evidence type="ECO:0000255" key="3">
    <source>
        <dbReference type="PROSITE-ProRule" id="PRU00967"/>
    </source>
</evidence>
<evidence type="ECO:0000255" key="4">
    <source>
        <dbReference type="PROSITE-ProRule" id="PRU00968"/>
    </source>
</evidence>
<sequence length="379" mass="42758">MINIRKTHPLMKIVNNAFIDLPAPSNISSWWNFGSLLGICLILQILTGLFLAMHYTPDTTTAFSSVTHICRDVNYGWIIRYMHANGASMFFICLFMHVGRGLYYGSYTFLETWNIGVILLFATMATAFMGYVLPWGQMSFWGATVITNLLSAIPYIGTNLVEWIWGGFSVDKATLTRFFAFHFIFPFIIAALAMVHLLFLHETGSNNPTGIPSDTDKIPFXXXXXIKDILGAILLILILMLLVLFTPDLLGDPDNYTPANPLNTPPHIKPEWYFLFAYAILRSIPNKLGGVLALILSILVLVIMPLLHTSKQRSMMFRPISQCMFWILVADLLTLTWIGGQPVEHPYIIIGQLASIMYFLIILVMMPVASIIENNLLKW</sequence>
<gene>
    <name type="primary">MT-CYB</name>
    <name type="synonym">COB</name>
    <name type="synonym">CYTB</name>
    <name type="synonym">MTCYB</name>
</gene>